<evidence type="ECO:0000255" key="1">
    <source>
        <dbReference type="HAMAP-Rule" id="MF_01156"/>
    </source>
</evidence>
<name>SCDA_STAAW</name>
<comment type="function">
    <text evidence="1">Di-iron-containing protein involved in the repair of iron-sulfur clusters damaged by oxidative and nitrosative stress conditions.</text>
</comment>
<comment type="subunit">
    <text evidence="1">Homodimer.</text>
</comment>
<comment type="subcellular location">
    <subcellularLocation>
        <location evidence="1">Cytoplasm</location>
    </subcellularLocation>
</comment>
<comment type="similarity">
    <text evidence="1">Belongs to the RIC family. ScdA subfamily.</text>
</comment>
<gene>
    <name evidence="1" type="primary">scdA</name>
    <name type="ordered locus">MW0235</name>
</gene>
<proteinExistence type="inferred from homology"/>
<sequence length="224" mass="25470">MINKNDIVADVVTDYPKAADIFRSVGIDFCCGGQVSIEAASLEKKNVDLNELLQRLNDVEQTNTPGSLNPKFLNVSSLIQYIQAAYHEPLREEFKNLTPYVTKLSKVHGPNHPYLVELKETYDTFKNGMLEHMQKEDDVDFPKLIKYEQGEVVDDINTVIDDLVSDHIATGQLLVKMSDLTSSYEPPIEACGTWRLVYQRLKALEVLTHEHVHLENHVLFKKVS</sequence>
<accession>Q8NYH4</accession>
<feature type="chain" id="PRO_0000220341" description="Iron-sulfur cluster repair protein ScdA">
    <location>
        <begin position="1"/>
        <end position="224"/>
    </location>
</feature>
<reference key="1">
    <citation type="journal article" date="2002" name="Lancet">
        <title>Genome and virulence determinants of high virulence community-acquired MRSA.</title>
        <authorList>
            <person name="Baba T."/>
            <person name="Takeuchi F."/>
            <person name="Kuroda M."/>
            <person name="Yuzawa H."/>
            <person name="Aoki K."/>
            <person name="Oguchi A."/>
            <person name="Nagai Y."/>
            <person name="Iwama N."/>
            <person name="Asano K."/>
            <person name="Naimi T."/>
            <person name="Kuroda H."/>
            <person name="Cui L."/>
            <person name="Yamamoto K."/>
            <person name="Hiramatsu K."/>
        </authorList>
    </citation>
    <scope>NUCLEOTIDE SEQUENCE [LARGE SCALE GENOMIC DNA]</scope>
    <source>
        <strain>MW2</strain>
    </source>
</reference>
<organism>
    <name type="scientific">Staphylococcus aureus (strain MW2)</name>
    <dbReference type="NCBI Taxonomy" id="196620"/>
    <lineage>
        <taxon>Bacteria</taxon>
        <taxon>Bacillati</taxon>
        <taxon>Bacillota</taxon>
        <taxon>Bacilli</taxon>
        <taxon>Bacillales</taxon>
        <taxon>Staphylococcaceae</taxon>
        <taxon>Staphylococcus</taxon>
    </lineage>
</organism>
<keyword id="KW-0963">Cytoplasm</keyword>
<keyword id="KW-0408">Iron</keyword>
<keyword id="KW-0479">Metal-binding</keyword>
<keyword id="KW-0346">Stress response</keyword>
<dbReference type="EMBL" id="BA000033">
    <property type="protein sequence ID" value="BAB94100.1"/>
    <property type="molecule type" value="Genomic_DNA"/>
</dbReference>
<dbReference type="RefSeq" id="WP_000608831.1">
    <property type="nucleotide sequence ID" value="NC_003923.1"/>
</dbReference>
<dbReference type="SMR" id="Q8NYH4"/>
<dbReference type="KEGG" id="sam:MW0235"/>
<dbReference type="HOGENOM" id="CLU_076075_0_1_9"/>
<dbReference type="GO" id="GO:0005737">
    <property type="term" value="C:cytoplasm"/>
    <property type="evidence" value="ECO:0007669"/>
    <property type="project" value="UniProtKB-SubCell"/>
</dbReference>
<dbReference type="GO" id="GO:0046872">
    <property type="term" value="F:metal ion binding"/>
    <property type="evidence" value="ECO:0007669"/>
    <property type="project" value="UniProtKB-KW"/>
</dbReference>
<dbReference type="GO" id="GO:0030091">
    <property type="term" value="P:protein repair"/>
    <property type="evidence" value="ECO:0007669"/>
    <property type="project" value="UniProtKB-UniRule"/>
</dbReference>
<dbReference type="GO" id="GO:0051409">
    <property type="term" value="P:response to nitrosative stress"/>
    <property type="evidence" value="ECO:0007669"/>
    <property type="project" value="UniProtKB-UniRule"/>
</dbReference>
<dbReference type="GO" id="GO:0006979">
    <property type="term" value="P:response to oxidative stress"/>
    <property type="evidence" value="ECO:0007669"/>
    <property type="project" value="UniProtKB-UniRule"/>
</dbReference>
<dbReference type="FunFam" id="1.20.120.520:FF:000003">
    <property type="entry name" value="Iron-sulfur cluster repair protein ScdA"/>
    <property type="match status" value="1"/>
</dbReference>
<dbReference type="Gene3D" id="1.20.120.520">
    <property type="entry name" value="nmb1532 protein domain like"/>
    <property type="match status" value="1"/>
</dbReference>
<dbReference type="Gene3D" id="1.10.3910.10">
    <property type="entry name" value="SP0561-like"/>
    <property type="match status" value="1"/>
</dbReference>
<dbReference type="HAMAP" id="MF_01156">
    <property type="entry name" value="RIC_ScdA"/>
    <property type="match status" value="1"/>
</dbReference>
<dbReference type="InterPro" id="IPR012312">
    <property type="entry name" value="Hemerythrin-like"/>
</dbReference>
<dbReference type="InterPro" id="IPR019903">
    <property type="entry name" value="RIC_family"/>
</dbReference>
<dbReference type="InterPro" id="IPR023551">
    <property type="entry name" value="ScdA"/>
</dbReference>
<dbReference type="InterPro" id="IPR038062">
    <property type="entry name" value="ScdA-like_N_sf"/>
</dbReference>
<dbReference type="NCBIfam" id="TIGR03652">
    <property type="entry name" value="FeS_repair_RIC"/>
    <property type="match status" value="1"/>
</dbReference>
<dbReference type="NCBIfam" id="NF009777">
    <property type="entry name" value="PRK13276.1"/>
    <property type="match status" value="1"/>
</dbReference>
<dbReference type="PANTHER" id="PTHR36438">
    <property type="entry name" value="IRON-SULFUR CLUSTER REPAIR PROTEIN YTFE"/>
    <property type="match status" value="1"/>
</dbReference>
<dbReference type="PANTHER" id="PTHR36438:SF1">
    <property type="entry name" value="IRON-SULFUR CLUSTER REPAIR PROTEIN YTFE"/>
    <property type="match status" value="1"/>
</dbReference>
<dbReference type="Pfam" id="PF01814">
    <property type="entry name" value="Hemerythrin"/>
    <property type="match status" value="1"/>
</dbReference>
<dbReference type="Pfam" id="PF04405">
    <property type="entry name" value="ScdA_N"/>
    <property type="match status" value="1"/>
</dbReference>
<dbReference type="SUPFAM" id="SSF140683">
    <property type="entry name" value="SP0561-like"/>
    <property type="match status" value="1"/>
</dbReference>
<protein>
    <recommendedName>
        <fullName evidence="1">Iron-sulfur cluster repair protein ScdA</fullName>
    </recommendedName>
</protein>